<dbReference type="EC" id="2.1.1.14" evidence="1"/>
<dbReference type="EMBL" id="AM286690">
    <property type="protein sequence ID" value="CAL16309.1"/>
    <property type="molecule type" value="Genomic_DNA"/>
</dbReference>
<dbReference type="RefSeq" id="WP_011588145.1">
    <property type="nucleotide sequence ID" value="NC_008260.1"/>
</dbReference>
<dbReference type="SMR" id="Q0VR89"/>
<dbReference type="STRING" id="393595.ABO_0861"/>
<dbReference type="KEGG" id="abo:ABO_0861"/>
<dbReference type="eggNOG" id="COG0620">
    <property type="taxonomic scope" value="Bacteria"/>
</dbReference>
<dbReference type="HOGENOM" id="CLU_013175_0_0_6"/>
<dbReference type="OrthoDB" id="244285at2"/>
<dbReference type="UniPathway" id="UPA00051">
    <property type="reaction ID" value="UER00082"/>
</dbReference>
<dbReference type="Proteomes" id="UP000008871">
    <property type="component" value="Chromosome"/>
</dbReference>
<dbReference type="GO" id="GO:0003871">
    <property type="term" value="F:5-methyltetrahydropteroyltriglutamate-homocysteine S-methyltransferase activity"/>
    <property type="evidence" value="ECO:0007669"/>
    <property type="project" value="UniProtKB-UniRule"/>
</dbReference>
<dbReference type="GO" id="GO:0008270">
    <property type="term" value="F:zinc ion binding"/>
    <property type="evidence" value="ECO:0007669"/>
    <property type="project" value="InterPro"/>
</dbReference>
<dbReference type="GO" id="GO:0009086">
    <property type="term" value="P:methionine biosynthetic process"/>
    <property type="evidence" value="ECO:0007669"/>
    <property type="project" value="UniProtKB-UniRule"/>
</dbReference>
<dbReference type="GO" id="GO:0032259">
    <property type="term" value="P:methylation"/>
    <property type="evidence" value="ECO:0007669"/>
    <property type="project" value="UniProtKB-KW"/>
</dbReference>
<dbReference type="CDD" id="cd03311">
    <property type="entry name" value="CIMS_C_terminal_like"/>
    <property type="match status" value="1"/>
</dbReference>
<dbReference type="CDD" id="cd03312">
    <property type="entry name" value="CIMS_N_terminal_like"/>
    <property type="match status" value="1"/>
</dbReference>
<dbReference type="FunFam" id="3.20.20.210:FF:000002">
    <property type="entry name" value="5-methyltetrahydropteroyltriglutamate--homocysteine methyltransferase"/>
    <property type="match status" value="1"/>
</dbReference>
<dbReference type="FunFam" id="3.20.20.210:FF:000003">
    <property type="entry name" value="5-methyltetrahydropteroyltriglutamate--homocysteine methyltransferase"/>
    <property type="match status" value="1"/>
</dbReference>
<dbReference type="Gene3D" id="3.20.20.210">
    <property type="match status" value="2"/>
</dbReference>
<dbReference type="HAMAP" id="MF_00172">
    <property type="entry name" value="Meth_synth"/>
    <property type="match status" value="1"/>
</dbReference>
<dbReference type="InterPro" id="IPR013215">
    <property type="entry name" value="Cbl-indep_Met_Synth_N"/>
</dbReference>
<dbReference type="InterPro" id="IPR006276">
    <property type="entry name" value="Cobalamin-indep_Met_synthase"/>
</dbReference>
<dbReference type="InterPro" id="IPR002629">
    <property type="entry name" value="Met_Synth_C/arc"/>
</dbReference>
<dbReference type="InterPro" id="IPR038071">
    <property type="entry name" value="UROD/MetE-like_sf"/>
</dbReference>
<dbReference type="NCBIfam" id="TIGR01371">
    <property type="entry name" value="met_syn_B12ind"/>
    <property type="match status" value="1"/>
</dbReference>
<dbReference type="NCBIfam" id="NF003556">
    <property type="entry name" value="PRK05222.1"/>
    <property type="match status" value="1"/>
</dbReference>
<dbReference type="PANTHER" id="PTHR30519">
    <property type="entry name" value="5-METHYLTETRAHYDROPTEROYLTRIGLUTAMATE--HOMOCYSTEINE METHYLTRANSFERASE"/>
    <property type="match status" value="1"/>
</dbReference>
<dbReference type="Pfam" id="PF08267">
    <property type="entry name" value="Meth_synt_1"/>
    <property type="match status" value="1"/>
</dbReference>
<dbReference type="Pfam" id="PF01717">
    <property type="entry name" value="Meth_synt_2"/>
    <property type="match status" value="1"/>
</dbReference>
<dbReference type="PIRSF" id="PIRSF000382">
    <property type="entry name" value="MeTrfase_B12_ind"/>
    <property type="match status" value="1"/>
</dbReference>
<dbReference type="SUPFAM" id="SSF51726">
    <property type="entry name" value="UROD/MetE-like"/>
    <property type="match status" value="2"/>
</dbReference>
<comment type="function">
    <text evidence="1">Catalyzes the transfer of a methyl group from 5-methyltetrahydrofolate to homocysteine resulting in methionine formation.</text>
</comment>
<comment type="catalytic activity">
    <reaction evidence="1">
        <text>5-methyltetrahydropteroyltri-L-glutamate + L-homocysteine = tetrahydropteroyltri-L-glutamate + L-methionine</text>
        <dbReference type="Rhea" id="RHEA:21196"/>
        <dbReference type="ChEBI" id="CHEBI:57844"/>
        <dbReference type="ChEBI" id="CHEBI:58140"/>
        <dbReference type="ChEBI" id="CHEBI:58199"/>
        <dbReference type="ChEBI" id="CHEBI:58207"/>
        <dbReference type="EC" id="2.1.1.14"/>
    </reaction>
</comment>
<comment type="cofactor">
    <cofactor evidence="1">
        <name>Zn(2+)</name>
        <dbReference type="ChEBI" id="CHEBI:29105"/>
    </cofactor>
    <text evidence="1">Binds 1 zinc ion per subunit.</text>
</comment>
<comment type="pathway">
    <text evidence="1">Amino-acid biosynthesis; L-methionine biosynthesis via de novo pathway; L-methionine from L-homocysteine (MetE route): step 1/1.</text>
</comment>
<comment type="similarity">
    <text evidence="1">Belongs to the vitamin-B12 independent methionine synthase family.</text>
</comment>
<proteinExistence type="inferred from homology"/>
<sequence length="763" mass="86266">MTTLHNLGFPRIGARRELKQAQEAYWAGDLQQSELEHVGKSLRERHWALQADAGVDLMPVGDFAWYDHILEFSSLLGVVPSRFEQDANAPVNLDTLFRMARGRAPTGTPAAACEMTKWFDTNYHYLVPELAADQTFRIARESLFEQVEEAKAQGHNPKPVIPGPLTYLYLSKGDRFEGAEDSAKLALLDNLIPVYREILQRFANQGVQWVQIDEPILVLDLPDSWQRAYLRVYDQLASASQTKLLLATYFGGLGNNLFTALELPVHGLHLDRVRGNDDLGQVIPRLGDKVLSLGVINGRNIWRTDLDAALDNITALHNELGDRLWLAPSCSLLHCPVDLEQEDTLDNELKSWLSFAKQKLEELALLGGALRGNSNVNSGLQTQRAALQARGLSSRIHNPAVAQRLADASQLSRDRVSPFAERIAQQQHALQLPAFPTTTIGSFPQTREIRTARRDWKAGKLNDAQYQQQMQEEIARCIRYQEEVELDVLVHGEAERNDMVEYFGELLDGFAFTRFGWVQSYGSRCVKPPIIFGDVQRPQAMTVEWARYAQSLTHKPVKGMLTGPVTILQWSFVRDDQPRADTCRQIALALRDEVQDLEKAGIKVIQIDEPALREGLPLRQEEWTQYLDWAVDCFRLATVSVDDDTQIHTHMCYSEFNDIIEAIAALDADVITIETSRSNMELLDAFRDFHYPNDIGPGVYDIHSPNEPDVAWMVQLMEKAAERLPKERLWVNPDCGLKTRKWDETRAALANMVNAAKQLRQAS</sequence>
<gene>
    <name evidence="1" type="primary">metE</name>
    <name type="ordered locus">ABO_0861</name>
</gene>
<keyword id="KW-0028">Amino-acid biosynthesis</keyword>
<keyword id="KW-0479">Metal-binding</keyword>
<keyword id="KW-0486">Methionine biosynthesis</keyword>
<keyword id="KW-0489">Methyltransferase</keyword>
<keyword id="KW-1185">Reference proteome</keyword>
<keyword id="KW-0677">Repeat</keyword>
<keyword id="KW-0808">Transferase</keyword>
<keyword id="KW-0862">Zinc</keyword>
<feature type="chain" id="PRO_1000017217" description="5-methyltetrahydropteroyltriglutamate--homocysteine methyltransferase">
    <location>
        <begin position="1"/>
        <end position="763"/>
    </location>
</feature>
<feature type="active site" description="Proton donor" evidence="1">
    <location>
        <position position="703"/>
    </location>
</feature>
<feature type="binding site" evidence="1">
    <location>
        <begin position="16"/>
        <end position="19"/>
    </location>
    <ligand>
        <name>5-methyltetrahydropteroyltri-L-glutamate</name>
        <dbReference type="ChEBI" id="CHEBI:58207"/>
    </ligand>
</feature>
<feature type="binding site" evidence="1">
    <location>
        <position position="117"/>
    </location>
    <ligand>
        <name>5-methyltetrahydropteroyltri-L-glutamate</name>
        <dbReference type="ChEBI" id="CHEBI:58207"/>
    </ligand>
</feature>
<feature type="binding site" evidence="1">
    <location>
        <begin position="440"/>
        <end position="442"/>
    </location>
    <ligand>
        <name>L-homocysteine</name>
        <dbReference type="ChEBI" id="CHEBI:58199"/>
    </ligand>
</feature>
<feature type="binding site" evidence="1">
    <location>
        <begin position="440"/>
        <end position="442"/>
    </location>
    <ligand>
        <name>L-methionine</name>
        <dbReference type="ChEBI" id="CHEBI:57844"/>
    </ligand>
</feature>
<feature type="binding site" evidence="1">
    <location>
        <position position="493"/>
    </location>
    <ligand>
        <name>L-homocysteine</name>
        <dbReference type="ChEBI" id="CHEBI:58199"/>
    </ligand>
</feature>
<feature type="binding site" evidence="1">
    <location>
        <position position="493"/>
    </location>
    <ligand>
        <name>L-methionine</name>
        <dbReference type="ChEBI" id="CHEBI:57844"/>
    </ligand>
</feature>
<feature type="binding site" evidence="1">
    <location>
        <begin position="524"/>
        <end position="525"/>
    </location>
    <ligand>
        <name>5-methyltetrahydropteroyltri-L-glutamate</name>
        <dbReference type="ChEBI" id="CHEBI:58207"/>
    </ligand>
</feature>
<feature type="binding site" evidence="1">
    <location>
        <position position="570"/>
    </location>
    <ligand>
        <name>5-methyltetrahydropteroyltri-L-glutamate</name>
        <dbReference type="ChEBI" id="CHEBI:58207"/>
    </ligand>
</feature>
<feature type="binding site" evidence="1">
    <location>
        <position position="608"/>
    </location>
    <ligand>
        <name>L-homocysteine</name>
        <dbReference type="ChEBI" id="CHEBI:58199"/>
    </ligand>
</feature>
<feature type="binding site" evidence="1">
    <location>
        <position position="608"/>
    </location>
    <ligand>
        <name>L-methionine</name>
        <dbReference type="ChEBI" id="CHEBI:57844"/>
    </ligand>
</feature>
<feature type="binding site" evidence="1">
    <location>
        <position position="614"/>
    </location>
    <ligand>
        <name>5-methyltetrahydropteroyltri-L-glutamate</name>
        <dbReference type="ChEBI" id="CHEBI:58207"/>
    </ligand>
</feature>
<feature type="binding site" evidence="1">
    <location>
        <position position="650"/>
    </location>
    <ligand>
        <name>Zn(2+)</name>
        <dbReference type="ChEBI" id="CHEBI:29105"/>
        <note>catalytic</note>
    </ligand>
</feature>
<feature type="binding site" evidence="1">
    <location>
        <position position="652"/>
    </location>
    <ligand>
        <name>Zn(2+)</name>
        <dbReference type="ChEBI" id="CHEBI:29105"/>
        <note>catalytic</note>
    </ligand>
</feature>
<feature type="binding site" evidence="1">
    <location>
        <position position="674"/>
    </location>
    <ligand>
        <name>Zn(2+)</name>
        <dbReference type="ChEBI" id="CHEBI:29105"/>
        <note>catalytic</note>
    </ligand>
</feature>
<feature type="binding site" evidence="1">
    <location>
        <position position="735"/>
    </location>
    <ligand>
        <name>Zn(2+)</name>
        <dbReference type="ChEBI" id="CHEBI:29105"/>
        <note>catalytic</note>
    </ligand>
</feature>
<organism>
    <name type="scientific">Alcanivorax borkumensis (strain ATCC 700651 / DSM 11573 / NCIMB 13689 / SK2)</name>
    <dbReference type="NCBI Taxonomy" id="393595"/>
    <lineage>
        <taxon>Bacteria</taxon>
        <taxon>Pseudomonadati</taxon>
        <taxon>Pseudomonadota</taxon>
        <taxon>Gammaproteobacteria</taxon>
        <taxon>Oceanospirillales</taxon>
        <taxon>Alcanivoracaceae</taxon>
        <taxon>Alcanivorax</taxon>
    </lineage>
</organism>
<name>METE_ALCBS</name>
<protein>
    <recommendedName>
        <fullName evidence="1">5-methyltetrahydropteroyltriglutamate--homocysteine methyltransferase</fullName>
        <ecNumber evidence="1">2.1.1.14</ecNumber>
    </recommendedName>
    <alternativeName>
        <fullName evidence="1">Cobalamin-independent methionine synthase</fullName>
    </alternativeName>
    <alternativeName>
        <fullName evidence="1">Methionine synthase, vitamin-B12 independent isozyme</fullName>
    </alternativeName>
</protein>
<accession>Q0VR89</accession>
<reference key="1">
    <citation type="journal article" date="2006" name="Nat. Biotechnol.">
        <title>Genome sequence of the ubiquitous hydrocarbon-degrading marine bacterium Alcanivorax borkumensis.</title>
        <authorList>
            <person name="Schneiker S."/>
            <person name="Martins dos Santos V.A.P."/>
            <person name="Bartels D."/>
            <person name="Bekel T."/>
            <person name="Brecht M."/>
            <person name="Buhrmester J."/>
            <person name="Chernikova T.N."/>
            <person name="Denaro R."/>
            <person name="Ferrer M."/>
            <person name="Gertler C."/>
            <person name="Goesmann A."/>
            <person name="Golyshina O.V."/>
            <person name="Kaminski F."/>
            <person name="Khachane A.N."/>
            <person name="Lang S."/>
            <person name="Linke B."/>
            <person name="McHardy A.C."/>
            <person name="Meyer F."/>
            <person name="Nechitaylo T."/>
            <person name="Puehler A."/>
            <person name="Regenhardt D."/>
            <person name="Rupp O."/>
            <person name="Sabirova J.S."/>
            <person name="Selbitschka W."/>
            <person name="Yakimov M.M."/>
            <person name="Timmis K.N."/>
            <person name="Vorhoelter F.-J."/>
            <person name="Weidner S."/>
            <person name="Kaiser O."/>
            <person name="Golyshin P.N."/>
        </authorList>
    </citation>
    <scope>NUCLEOTIDE SEQUENCE [LARGE SCALE GENOMIC DNA]</scope>
    <source>
        <strain>ATCC 700651 / DSM 11573 / NCIMB 13689 / SK2</strain>
    </source>
</reference>
<evidence type="ECO:0000255" key="1">
    <source>
        <dbReference type="HAMAP-Rule" id="MF_00172"/>
    </source>
</evidence>